<keyword id="KW-0963">Cytoplasm</keyword>
<keyword id="KW-0489">Methyltransferase</keyword>
<keyword id="KW-1185">Reference proteome</keyword>
<keyword id="KW-0698">rRNA processing</keyword>
<keyword id="KW-0949">S-adenosyl-L-methionine</keyword>
<keyword id="KW-0808">Transferase</keyword>
<proteinExistence type="evidence at protein level"/>
<reference key="1">
    <citation type="journal article" date="1995" name="Science">
        <title>Whole-genome random sequencing and assembly of Haemophilus influenzae Rd.</title>
        <authorList>
            <person name="Fleischmann R.D."/>
            <person name="Adams M.D."/>
            <person name="White O."/>
            <person name="Clayton R.A."/>
            <person name="Kirkness E.F."/>
            <person name="Kerlavage A.R."/>
            <person name="Bult C.J."/>
            <person name="Tomb J.-F."/>
            <person name="Dougherty B.A."/>
            <person name="Merrick J.M."/>
            <person name="McKenney K."/>
            <person name="Sutton G.G."/>
            <person name="FitzHugh W."/>
            <person name="Fields C.A."/>
            <person name="Gocayne J.D."/>
            <person name="Scott J.D."/>
            <person name="Shirley R."/>
            <person name="Liu L.-I."/>
            <person name="Glodek A."/>
            <person name="Kelley J.M."/>
            <person name="Weidman J.F."/>
            <person name="Phillips C.A."/>
            <person name="Spriggs T."/>
            <person name="Hedblom E."/>
            <person name="Cotton M.D."/>
            <person name="Utterback T.R."/>
            <person name="Hanna M.C."/>
            <person name="Nguyen D.T."/>
            <person name="Saudek D.M."/>
            <person name="Brandon R.C."/>
            <person name="Fine L.D."/>
            <person name="Fritchman J.L."/>
            <person name="Fuhrmann J.L."/>
            <person name="Geoghagen N.S.M."/>
            <person name="Gnehm C.L."/>
            <person name="McDonald L.A."/>
            <person name="Small K.V."/>
            <person name="Fraser C.M."/>
            <person name="Smith H.O."/>
            <person name="Venter J.C."/>
        </authorList>
    </citation>
    <scope>NUCLEOTIDE SEQUENCE [LARGE SCALE GENOMIC DNA]</scope>
    <source>
        <strain>ATCC 51907 / DSM 11121 / KW20 / Rd</strain>
    </source>
</reference>
<reference key="2">
    <citation type="journal article" date="2000" name="Electrophoresis">
        <title>Two-dimensional map of the proteome of Haemophilus influenzae.</title>
        <authorList>
            <person name="Langen H."/>
            <person name="Takacs B."/>
            <person name="Evers S."/>
            <person name="Berndt P."/>
            <person name="Lahm H.W."/>
            <person name="Wipf B."/>
            <person name="Gray C."/>
            <person name="Fountoulakis M."/>
        </authorList>
    </citation>
    <scope>IDENTIFICATION BY MASS SPECTROMETRY</scope>
    <source>
        <strain>ATCC 51907 / DSM 11121 / KW20 / Rd</strain>
    </source>
</reference>
<sequence length="321" mass="36052">MNSENSFSSSEHITVLLHEAVNGLALKENGIYIDGTFGRGGHSRFILSQLSSNGRLIAVDRDPRAIAEAHKIQDLRFQIEHNSFSHIPEICDKLNLVGKIDGILLDLGVSSPQLDEAERGFSFMKDGPLDMRMDTTQGLSAEEWLKQVSIEDLTWVLKTFGEERFAKRIATAIVDFNKSAVKNGTEFLSRTSQLAELISQAVPFKDKHKHPATRSFQAIRIFINSELDELESLLNSALDMLAPEGRLSIISFHSLEDRMVKHFMKKQSKGEDIPKGLPLREDQIQRNQKLRIIGKAIQPSDAEIQANPRSRSAILRVAERI</sequence>
<feature type="chain" id="PRO_0000108635" description="Ribosomal RNA small subunit methyltransferase H">
    <location>
        <begin position="1"/>
        <end position="321"/>
    </location>
</feature>
<feature type="binding site" evidence="1">
    <location>
        <begin position="40"/>
        <end position="42"/>
    </location>
    <ligand>
        <name>S-adenosyl-L-methionine</name>
        <dbReference type="ChEBI" id="CHEBI:59789"/>
    </ligand>
</feature>
<feature type="binding site" evidence="1">
    <location>
        <position position="60"/>
    </location>
    <ligand>
        <name>S-adenosyl-L-methionine</name>
        <dbReference type="ChEBI" id="CHEBI:59789"/>
    </ligand>
</feature>
<feature type="binding site" evidence="1">
    <location>
        <position position="84"/>
    </location>
    <ligand>
        <name>S-adenosyl-L-methionine</name>
        <dbReference type="ChEBI" id="CHEBI:59789"/>
    </ligand>
</feature>
<feature type="binding site" evidence="1">
    <location>
        <position position="106"/>
    </location>
    <ligand>
        <name>S-adenosyl-L-methionine</name>
        <dbReference type="ChEBI" id="CHEBI:59789"/>
    </ligand>
</feature>
<feature type="binding site" evidence="1">
    <location>
        <position position="113"/>
    </location>
    <ligand>
        <name>S-adenosyl-L-methionine</name>
        <dbReference type="ChEBI" id="CHEBI:59789"/>
    </ligand>
</feature>
<protein>
    <recommendedName>
        <fullName evidence="1">Ribosomal RNA small subunit methyltransferase H</fullName>
        <ecNumber evidence="1">2.1.1.199</ecNumber>
    </recommendedName>
    <alternativeName>
        <fullName evidence="1">16S rRNA m(4)C1402 methyltransferase</fullName>
    </alternativeName>
    <alternativeName>
        <fullName evidence="1">rRNA (cytosine-N(4)-)-methyltransferase RsmH</fullName>
    </alternativeName>
</protein>
<dbReference type="EC" id="2.1.1.199" evidence="1"/>
<dbReference type="EMBL" id="L42023">
    <property type="protein sequence ID" value="AAC22785.1"/>
    <property type="molecule type" value="Genomic_DNA"/>
</dbReference>
<dbReference type="PIR" id="F64167">
    <property type="entry name" value="F64167"/>
</dbReference>
<dbReference type="RefSeq" id="NP_439288.1">
    <property type="nucleotide sequence ID" value="NC_000907.1"/>
</dbReference>
<dbReference type="SMR" id="P45057"/>
<dbReference type="STRING" id="71421.HI_1130"/>
<dbReference type="EnsemblBacteria" id="AAC22785">
    <property type="protein sequence ID" value="AAC22785"/>
    <property type="gene ID" value="HI_1130"/>
</dbReference>
<dbReference type="KEGG" id="hin:HI_1130"/>
<dbReference type="PATRIC" id="fig|71421.8.peg.1180"/>
<dbReference type="eggNOG" id="COG0275">
    <property type="taxonomic scope" value="Bacteria"/>
</dbReference>
<dbReference type="HOGENOM" id="CLU_038422_2_0_6"/>
<dbReference type="OrthoDB" id="9806637at2"/>
<dbReference type="PhylomeDB" id="P45057"/>
<dbReference type="BioCyc" id="HINF71421:G1GJ1-1163-MONOMER"/>
<dbReference type="Proteomes" id="UP000000579">
    <property type="component" value="Chromosome"/>
</dbReference>
<dbReference type="GO" id="GO:0005737">
    <property type="term" value="C:cytoplasm"/>
    <property type="evidence" value="ECO:0000318"/>
    <property type="project" value="GO_Central"/>
</dbReference>
<dbReference type="GO" id="GO:0071424">
    <property type="term" value="F:rRNA (cytosine-N4-)-methyltransferase activity"/>
    <property type="evidence" value="ECO:0000318"/>
    <property type="project" value="GO_Central"/>
</dbReference>
<dbReference type="GO" id="GO:0070475">
    <property type="term" value="P:rRNA base methylation"/>
    <property type="evidence" value="ECO:0000318"/>
    <property type="project" value="GO_Central"/>
</dbReference>
<dbReference type="FunFam" id="1.10.150.170:FF:000001">
    <property type="entry name" value="Ribosomal RNA small subunit methyltransferase H"/>
    <property type="match status" value="1"/>
</dbReference>
<dbReference type="Gene3D" id="1.10.150.170">
    <property type="entry name" value="Putative methyltransferase TM0872, insert domain"/>
    <property type="match status" value="1"/>
</dbReference>
<dbReference type="Gene3D" id="3.40.50.150">
    <property type="entry name" value="Vaccinia Virus protein VP39"/>
    <property type="match status" value="1"/>
</dbReference>
<dbReference type="HAMAP" id="MF_01007">
    <property type="entry name" value="16SrRNA_methyltr_H"/>
    <property type="match status" value="1"/>
</dbReference>
<dbReference type="InterPro" id="IPR002903">
    <property type="entry name" value="RsmH"/>
</dbReference>
<dbReference type="InterPro" id="IPR023397">
    <property type="entry name" value="SAM-dep_MeTrfase_MraW_recog"/>
</dbReference>
<dbReference type="InterPro" id="IPR029063">
    <property type="entry name" value="SAM-dependent_MTases_sf"/>
</dbReference>
<dbReference type="NCBIfam" id="TIGR00006">
    <property type="entry name" value="16S rRNA (cytosine(1402)-N(4))-methyltransferase RsmH"/>
    <property type="match status" value="1"/>
</dbReference>
<dbReference type="PANTHER" id="PTHR11265:SF0">
    <property type="entry name" value="12S RRNA N4-METHYLCYTIDINE METHYLTRANSFERASE"/>
    <property type="match status" value="1"/>
</dbReference>
<dbReference type="PANTHER" id="PTHR11265">
    <property type="entry name" value="S-ADENOSYL-METHYLTRANSFERASE MRAW"/>
    <property type="match status" value="1"/>
</dbReference>
<dbReference type="Pfam" id="PF01795">
    <property type="entry name" value="Methyltransf_5"/>
    <property type="match status" value="1"/>
</dbReference>
<dbReference type="PIRSF" id="PIRSF004486">
    <property type="entry name" value="MraW"/>
    <property type="match status" value="1"/>
</dbReference>
<dbReference type="SUPFAM" id="SSF81799">
    <property type="entry name" value="Putative methyltransferase TM0872, insert domain"/>
    <property type="match status" value="1"/>
</dbReference>
<dbReference type="SUPFAM" id="SSF53335">
    <property type="entry name" value="S-adenosyl-L-methionine-dependent methyltransferases"/>
    <property type="match status" value="1"/>
</dbReference>
<name>RSMH_HAEIN</name>
<comment type="function">
    <text evidence="1">Specifically methylates the N4 position of cytidine in position 1402 (C1402) of 16S rRNA.</text>
</comment>
<comment type="catalytic activity">
    <reaction evidence="1">
        <text>cytidine(1402) in 16S rRNA + S-adenosyl-L-methionine = N(4)-methylcytidine(1402) in 16S rRNA + S-adenosyl-L-homocysteine + H(+)</text>
        <dbReference type="Rhea" id="RHEA:42928"/>
        <dbReference type="Rhea" id="RHEA-COMP:10286"/>
        <dbReference type="Rhea" id="RHEA-COMP:10287"/>
        <dbReference type="ChEBI" id="CHEBI:15378"/>
        <dbReference type="ChEBI" id="CHEBI:57856"/>
        <dbReference type="ChEBI" id="CHEBI:59789"/>
        <dbReference type="ChEBI" id="CHEBI:74506"/>
        <dbReference type="ChEBI" id="CHEBI:82748"/>
        <dbReference type="EC" id="2.1.1.199"/>
    </reaction>
</comment>
<comment type="subcellular location">
    <subcellularLocation>
        <location evidence="1">Cytoplasm</location>
    </subcellularLocation>
</comment>
<comment type="similarity">
    <text evidence="1">Belongs to the methyltransferase superfamily. RsmH family.</text>
</comment>
<organism>
    <name type="scientific">Haemophilus influenzae (strain ATCC 51907 / DSM 11121 / KW20 / Rd)</name>
    <dbReference type="NCBI Taxonomy" id="71421"/>
    <lineage>
        <taxon>Bacteria</taxon>
        <taxon>Pseudomonadati</taxon>
        <taxon>Pseudomonadota</taxon>
        <taxon>Gammaproteobacteria</taxon>
        <taxon>Pasteurellales</taxon>
        <taxon>Pasteurellaceae</taxon>
        <taxon>Haemophilus</taxon>
    </lineage>
</organism>
<gene>
    <name evidence="1" type="primary">rsmH</name>
    <name type="synonym">mraW</name>
    <name type="ordered locus">HI_1130</name>
</gene>
<accession>P45057</accession>
<evidence type="ECO:0000255" key="1">
    <source>
        <dbReference type="HAMAP-Rule" id="MF_01007"/>
    </source>
</evidence>